<keyword id="KW-1185">Reference proteome</keyword>
<keyword id="KW-0687">Ribonucleoprotein</keyword>
<keyword id="KW-0689">Ribosomal protein</keyword>
<comment type="similarity">
    <text evidence="1">Belongs to the bacterial ribosomal protein bS16 family.</text>
</comment>
<gene>
    <name evidence="1" type="primary">rpsP</name>
    <name type="ordered locus">CA_C1755</name>
</gene>
<accession>Q97I97</accession>
<name>RS16_CLOAB</name>
<reference key="1">
    <citation type="journal article" date="2001" name="J. Bacteriol.">
        <title>Genome sequence and comparative analysis of the solvent-producing bacterium Clostridium acetobutylicum.</title>
        <authorList>
            <person name="Noelling J."/>
            <person name="Breton G."/>
            <person name="Omelchenko M.V."/>
            <person name="Makarova K.S."/>
            <person name="Zeng Q."/>
            <person name="Gibson R."/>
            <person name="Lee H.M."/>
            <person name="Dubois J."/>
            <person name="Qiu D."/>
            <person name="Hitti J."/>
            <person name="Wolf Y.I."/>
            <person name="Tatusov R.L."/>
            <person name="Sabathe F."/>
            <person name="Doucette-Stamm L.A."/>
            <person name="Soucaille P."/>
            <person name="Daly M.J."/>
            <person name="Bennett G.N."/>
            <person name="Koonin E.V."/>
            <person name="Smith D.R."/>
        </authorList>
    </citation>
    <scope>NUCLEOTIDE SEQUENCE [LARGE SCALE GENOMIC DNA]</scope>
    <source>
        <strain>ATCC 824 / DSM 792 / JCM 1419 / IAM 19013 / LMG 5710 / NBRC 13948 / NRRL B-527 / VKM B-1787 / 2291 / W</strain>
    </source>
</reference>
<feature type="chain" id="PRO_0000167176" description="Small ribosomal subunit protein bS16">
    <location>
        <begin position="1"/>
        <end position="81"/>
    </location>
</feature>
<organism>
    <name type="scientific">Clostridium acetobutylicum (strain ATCC 824 / DSM 792 / JCM 1419 / IAM 19013 / LMG 5710 / NBRC 13948 / NRRL B-527 / VKM B-1787 / 2291 / W)</name>
    <dbReference type="NCBI Taxonomy" id="272562"/>
    <lineage>
        <taxon>Bacteria</taxon>
        <taxon>Bacillati</taxon>
        <taxon>Bacillota</taxon>
        <taxon>Clostridia</taxon>
        <taxon>Eubacteriales</taxon>
        <taxon>Clostridiaceae</taxon>
        <taxon>Clostridium</taxon>
    </lineage>
</organism>
<sequence length="81" mass="9148">MVKIRLKRMGAKKAPFYRIVVADSRSPRDGKFIEELGYYNPTTEPVTFKVDADKVNAWMKNGAQPSETVKKLLDKSGVTTK</sequence>
<protein>
    <recommendedName>
        <fullName evidence="1">Small ribosomal subunit protein bS16</fullName>
    </recommendedName>
    <alternativeName>
        <fullName evidence="2">30S ribosomal protein S16</fullName>
    </alternativeName>
</protein>
<evidence type="ECO:0000255" key="1">
    <source>
        <dbReference type="HAMAP-Rule" id="MF_00385"/>
    </source>
</evidence>
<evidence type="ECO:0000305" key="2"/>
<proteinExistence type="inferred from homology"/>
<dbReference type="EMBL" id="AE001437">
    <property type="protein sequence ID" value="AAK79721.1"/>
    <property type="molecule type" value="Genomic_DNA"/>
</dbReference>
<dbReference type="PIR" id="F97116">
    <property type="entry name" value="F97116"/>
</dbReference>
<dbReference type="RefSeq" id="NP_348381.1">
    <property type="nucleotide sequence ID" value="NC_003030.1"/>
</dbReference>
<dbReference type="RefSeq" id="WP_010965062.1">
    <property type="nucleotide sequence ID" value="NC_003030.1"/>
</dbReference>
<dbReference type="SMR" id="Q97I97"/>
<dbReference type="STRING" id="272562.CA_C1755"/>
<dbReference type="GeneID" id="44998250"/>
<dbReference type="KEGG" id="cac:CA_C1755"/>
<dbReference type="PATRIC" id="fig|272562.8.peg.1959"/>
<dbReference type="eggNOG" id="COG0228">
    <property type="taxonomic scope" value="Bacteria"/>
</dbReference>
<dbReference type="HOGENOM" id="CLU_100590_5_0_9"/>
<dbReference type="OrthoDB" id="9807878at2"/>
<dbReference type="Proteomes" id="UP000000814">
    <property type="component" value="Chromosome"/>
</dbReference>
<dbReference type="GO" id="GO:0005737">
    <property type="term" value="C:cytoplasm"/>
    <property type="evidence" value="ECO:0007669"/>
    <property type="project" value="UniProtKB-ARBA"/>
</dbReference>
<dbReference type="GO" id="GO:0015935">
    <property type="term" value="C:small ribosomal subunit"/>
    <property type="evidence" value="ECO:0007669"/>
    <property type="project" value="TreeGrafter"/>
</dbReference>
<dbReference type="GO" id="GO:0003735">
    <property type="term" value="F:structural constituent of ribosome"/>
    <property type="evidence" value="ECO:0007669"/>
    <property type="project" value="InterPro"/>
</dbReference>
<dbReference type="GO" id="GO:0006412">
    <property type="term" value="P:translation"/>
    <property type="evidence" value="ECO:0007669"/>
    <property type="project" value="UniProtKB-UniRule"/>
</dbReference>
<dbReference type="Gene3D" id="3.30.1320.10">
    <property type="match status" value="1"/>
</dbReference>
<dbReference type="HAMAP" id="MF_00385">
    <property type="entry name" value="Ribosomal_bS16"/>
    <property type="match status" value="1"/>
</dbReference>
<dbReference type="InterPro" id="IPR000307">
    <property type="entry name" value="Ribosomal_bS16"/>
</dbReference>
<dbReference type="InterPro" id="IPR020592">
    <property type="entry name" value="Ribosomal_bS16_CS"/>
</dbReference>
<dbReference type="InterPro" id="IPR023803">
    <property type="entry name" value="Ribosomal_bS16_dom_sf"/>
</dbReference>
<dbReference type="NCBIfam" id="TIGR00002">
    <property type="entry name" value="S16"/>
    <property type="match status" value="1"/>
</dbReference>
<dbReference type="PANTHER" id="PTHR12919">
    <property type="entry name" value="30S RIBOSOMAL PROTEIN S16"/>
    <property type="match status" value="1"/>
</dbReference>
<dbReference type="PANTHER" id="PTHR12919:SF20">
    <property type="entry name" value="SMALL RIBOSOMAL SUBUNIT PROTEIN BS16M"/>
    <property type="match status" value="1"/>
</dbReference>
<dbReference type="Pfam" id="PF00886">
    <property type="entry name" value="Ribosomal_S16"/>
    <property type="match status" value="1"/>
</dbReference>
<dbReference type="SUPFAM" id="SSF54565">
    <property type="entry name" value="Ribosomal protein S16"/>
    <property type="match status" value="1"/>
</dbReference>
<dbReference type="PROSITE" id="PS00732">
    <property type="entry name" value="RIBOSOMAL_S16"/>
    <property type="match status" value="1"/>
</dbReference>